<reference key="1">
    <citation type="submission" date="2006-12" db="EMBL/GenBank/DDBJ databases">
        <title>Complete sequence of Chlorobium phaeobacteroides DSM 266.</title>
        <authorList>
            <consortium name="US DOE Joint Genome Institute"/>
            <person name="Copeland A."/>
            <person name="Lucas S."/>
            <person name="Lapidus A."/>
            <person name="Barry K."/>
            <person name="Detter J.C."/>
            <person name="Glavina del Rio T."/>
            <person name="Hammon N."/>
            <person name="Israni S."/>
            <person name="Pitluck S."/>
            <person name="Goltsman E."/>
            <person name="Schmutz J."/>
            <person name="Larimer F."/>
            <person name="Land M."/>
            <person name="Hauser L."/>
            <person name="Mikhailova N."/>
            <person name="Li T."/>
            <person name="Overmann J."/>
            <person name="Bryant D.A."/>
            <person name="Richardson P."/>
        </authorList>
    </citation>
    <scope>NUCLEOTIDE SEQUENCE [LARGE SCALE GENOMIC DNA]</scope>
    <source>
        <strain>DSM 266 / SMG 266 / 2430</strain>
    </source>
</reference>
<name>RISB_CHLPD</name>
<protein>
    <recommendedName>
        <fullName evidence="1">6,7-dimethyl-8-ribityllumazine synthase</fullName>
        <shortName evidence="1">DMRL synthase</shortName>
        <shortName evidence="1">LS</shortName>
        <shortName evidence="1">Lumazine synthase</shortName>
        <ecNumber evidence="1">2.5.1.78</ecNumber>
    </recommendedName>
</protein>
<evidence type="ECO:0000255" key="1">
    <source>
        <dbReference type="HAMAP-Rule" id="MF_00178"/>
    </source>
</evidence>
<comment type="function">
    <text evidence="1">Catalyzes the formation of 6,7-dimethyl-8-ribityllumazine by condensation of 5-amino-6-(D-ribitylamino)uracil with 3,4-dihydroxy-2-butanone 4-phosphate. This is the penultimate step in the biosynthesis of riboflavin.</text>
</comment>
<comment type="catalytic activity">
    <reaction evidence="1">
        <text>(2S)-2-hydroxy-3-oxobutyl phosphate + 5-amino-6-(D-ribitylamino)uracil = 6,7-dimethyl-8-(1-D-ribityl)lumazine + phosphate + 2 H2O + H(+)</text>
        <dbReference type="Rhea" id="RHEA:26152"/>
        <dbReference type="ChEBI" id="CHEBI:15377"/>
        <dbReference type="ChEBI" id="CHEBI:15378"/>
        <dbReference type="ChEBI" id="CHEBI:15934"/>
        <dbReference type="ChEBI" id="CHEBI:43474"/>
        <dbReference type="ChEBI" id="CHEBI:58201"/>
        <dbReference type="ChEBI" id="CHEBI:58830"/>
        <dbReference type="EC" id="2.5.1.78"/>
    </reaction>
</comment>
<comment type="pathway">
    <text evidence="1">Cofactor biosynthesis; riboflavin biosynthesis; riboflavin from 2-hydroxy-3-oxobutyl phosphate and 5-amino-6-(D-ribitylamino)uracil: step 1/2.</text>
</comment>
<comment type="similarity">
    <text evidence="1">Belongs to the DMRL synthase family.</text>
</comment>
<keyword id="KW-1185">Reference proteome</keyword>
<keyword id="KW-0686">Riboflavin biosynthesis</keyword>
<keyword id="KW-0808">Transferase</keyword>
<dbReference type="EC" id="2.5.1.78" evidence="1"/>
<dbReference type="EMBL" id="CP000492">
    <property type="protein sequence ID" value="ABL66536.1"/>
    <property type="molecule type" value="Genomic_DNA"/>
</dbReference>
<dbReference type="RefSeq" id="WP_011746313.1">
    <property type="nucleotide sequence ID" value="NC_008639.1"/>
</dbReference>
<dbReference type="SMR" id="A1BJF9"/>
<dbReference type="STRING" id="290317.Cpha266_2548"/>
<dbReference type="KEGG" id="cph:Cpha266_2548"/>
<dbReference type="eggNOG" id="COG0054">
    <property type="taxonomic scope" value="Bacteria"/>
</dbReference>
<dbReference type="HOGENOM" id="CLU_089358_1_1_10"/>
<dbReference type="OrthoDB" id="9809709at2"/>
<dbReference type="UniPathway" id="UPA00275">
    <property type="reaction ID" value="UER00404"/>
</dbReference>
<dbReference type="Proteomes" id="UP000008701">
    <property type="component" value="Chromosome"/>
</dbReference>
<dbReference type="GO" id="GO:0005829">
    <property type="term" value="C:cytosol"/>
    <property type="evidence" value="ECO:0007669"/>
    <property type="project" value="TreeGrafter"/>
</dbReference>
<dbReference type="GO" id="GO:0009349">
    <property type="term" value="C:riboflavin synthase complex"/>
    <property type="evidence" value="ECO:0007669"/>
    <property type="project" value="InterPro"/>
</dbReference>
<dbReference type="GO" id="GO:0000906">
    <property type="term" value="F:6,7-dimethyl-8-ribityllumazine synthase activity"/>
    <property type="evidence" value="ECO:0007669"/>
    <property type="project" value="UniProtKB-UniRule"/>
</dbReference>
<dbReference type="GO" id="GO:0009231">
    <property type="term" value="P:riboflavin biosynthetic process"/>
    <property type="evidence" value="ECO:0007669"/>
    <property type="project" value="UniProtKB-UniRule"/>
</dbReference>
<dbReference type="CDD" id="cd09209">
    <property type="entry name" value="Lumazine_synthase-I"/>
    <property type="match status" value="1"/>
</dbReference>
<dbReference type="FunFam" id="3.40.50.960:FF:000001">
    <property type="entry name" value="6,7-dimethyl-8-ribityllumazine synthase"/>
    <property type="match status" value="1"/>
</dbReference>
<dbReference type="Gene3D" id="3.40.50.960">
    <property type="entry name" value="Lumazine/riboflavin synthase"/>
    <property type="match status" value="1"/>
</dbReference>
<dbReference type="HAMAP" id="MF_00178">
    <property type="entry name" value="Lumazine_synth"/>
    <property type="match status" value="1"/>
</dbReference>
<dbReference type="InterPro" id="IPR034964">
    <property type="entry name" value="LS"/>
</dbReference>
<dbReference type="InterPro" id="IPR002180">
    <property type="entry name" value="LS/RS"/>
</dbReference>
<dbReference type="InterPro" id="IPR036467">
    <property type="entry name" value="LS/RS_sf"/>
</dbReference>
<dbReference type="NCBIfam" id="TIGR00114">
    <property type="entry name" value="lumazine-synth"/>
    <property type="match status" value="1"/>
</dbReference>
<dbReference type="NCBIfam" id="NF000812">
    <property type="entry name" value="PRK00061.1-4"/>
    <property type="match status" value="1"/>
</dbReference>
<dbReference type="PANTHER" id="PTHR21058:SF0">
    <property type="entry name" value="6,7-DIMETHYL-8-RIBITYLLUMAZINE SYNTHASE"/>
    <property type="match status" value="1"/>
</dbReference>
<dbReference type="PANTHER" id="PTHR21058">
    <property type="entry name" value="6,7-DIMETHYL-8-RIBITYLLUMAZINE SYNTHASE DMRL SYNTHASE LUMAZINE SYNTHASE"/>
    <property type="match status" value="1"/>
</dbReference>
<dbReference type="Pfam" id="PF00885">
    <property type="entry name" value="DMRL_synthase"/>
    <property type="match status" value="1"/>
</dbReference>
<dbReference type="SUPFAM" id="SSF52121">
    <property type="entry name" value="Lumazine synthase"/>
    <property type="match status" value="1"/>
</dbReference>
<organism>
    <name type="scientific">Chlorobium phaeobacteroides (strain DSM 266 / SMG 266 / 2430)</name>
    <dbReference type="NCBI Taxonomy" id="290317"/>
    <lineage>
        <taxon>Bacteria</taxon>
        <taxon>Pseudomonadati</taxon>
        <taxon>Chlorobiota</taxon>
        <taxon>Chlorobiia</taxon>
        <taxon>Chlorobiales</taxon>
        <taxon>Chlorobiaceae</taxon>
        <taxon>Chlorobium/Pelodictyon group</taxon>
        <taxon>Chlorobium</taxon>
    </lineage>
</organism>
<gene>
    <name evidence="1" type="primary">ribH</name>
    <name type="ordered locus">Cpha266_2548</name>
</gene>
<feature type="chain" id="PRO_1000040398" description="6,7-dimethyl-8-ribityllumazine synthase">
    <location>
        <begin position="1"/>
        <end position="155"/>
    </location>
</feature>
<feature type="active site" description="Proton donor" evidence="1">
    <location>
        <position position="90"/>
    </location>
</feature>
<feature type="binding site" evidence="1">
    <location>
        <position position="24"/>
    </location>
    <ligand>
        <name>5-amino-6-(D-ribitylamino)uracil</name>
        <dbReference type="ChEBI" id="CHEBI:15934"/>
    </ligand>
</feature>
<feature type="binding site" evidence="1">
    <location>
        <begin position="58"/>
        <end position="60"/>
    </location>
    <ligand>
        <name>5-amino-6-(D-ribitylamino)uracil</name>
        <dbReference type="ChEBI" id="CHEBI:15934"/>
    </ligand>
</feature>
<feature type="binding site" evidence="1">
    <location>
        <begin position="82"/>
        <end position="84"/>
    </location>
    <ligand>
        <name>5-amino-6-(D-ribitylamino)uracil</name>
        <dbReference type="ChEBI" id="CHEBI:15934"/>
    </ligand>
</feature>
<feature type="binding site" evidence="1">
    <location>
        <begin position="87"/>
        <end position="88"/>
    </location>
    <ligand>
        <name>(2S)-2-hydroxy-3-oxobutyl phosphate</name>
        <dbReference type="ChEBI" id="CHEBI:58830"/>
    </ligand>
</feature>
<feature type="binding site" evidence="1">
    <location>
        <position position="115"/>
    </location>
    <ligand>
        <name>5-amino-6-(D-ribitylamino)uracil</name>
        <dbReference type="ChEBI" id="CHEBI:15934"/>
    </ligand>
</feature>
<feature type="binding site" evidence="1">
    <location>
        <position position="129"/>
    </location>
    <ligand>
        <name>(2S)-2-hydroxy-3-oxobutyl phosphate</name>
        <dbReference type="ChEBI" id="CHEBI:58830"/>
    </ligand>
</feature>
<accession>A1BJF9</accession>
<sequence>MQIKQIEGSLSAKGARFALVVSRFNDFIGQKLVEGALDCLRRHGAEDSEVVIYRCPGAFELPMVAKKAALSGNHDAVIALGVIIRGSTPHFDVIAAEATKGLAQVALDTMIPVAFGVLTTENLEQAIERAGTKAGNKGFDAAMTVIEMVNLYRQF</sequence>
<proteinExistence type="inferred from homology"/>